<organism>
    <name type="scientific">Bacteroides fragilis (strain YCH46)</name>
    <dbReference type="NCBI Taxonomy" id="295405"/>
    <lineage>
        <taxon>Bacteria</taxon>
        <taxon>Pseudomonadati</taxon>
        <taxon>Bacteroidota</taxon>
        <taxon>Bacteroidia</taxon>
        <taxon>Bacteroidales</taxon>
        <taxon>Bacteroidaceae</taxon>
        <taxon>Bacteroides</taxon>
    </lineage>
</organism>
<keyword id="KW-0963">Cytoplasm</keyword>
<keyword id="KW-0274">FAD</keyword>
<keyword id="KW-0285">Flavoprotein</keyword>
<keyword id="KW-0520">NAD</keyword>
<keyword id="KW-0819">tRNA processing</keyword>
<name>MNMG_BACFR</name>
<comment type="function">
    <text evidence="1">NAD-binding protein involved in the addition of a carboxymethylaminomethyl (cmnm) group at the wobble position (U34) of certain tRNAs, forming tRNA-cmnm(5)s(2)U34.</text>
</comment>
<comment type="cofactor">
    <cofactor evidence="1">
        <name>FAD</name>
        <dbReference type="ChEBI" id="CHEBI:57692"/>
    </cofactor>
</comment>
<comment type="subunit">
    <text evidence="1">Homodimer. Heterotetramer of two MnmE and two MnmG subunits.</text>
</comment>
<comment type="subcellular location">
    <subcellularLocation>
        <location evidence="1">Cytoplasm</location>
    </subcellularLocation>
</comment>
<comment type="similarity">
    <text evidence="1">Belongs to the MnmG family.</text>
</comment>
<proteinExistence type="inferred from homology"/>
<dbReference type="EMBL" id="AP006841">
    <property type="protein sequence ID" value="BAD46849.1"/>
    <property type="molecule type" value="Genomic_DNA"/>
</dbReference>
<dbReference type="RefSeq" id="WP_005783704.1">
    <property type="nucleotide sequence ID" value="NC_006347.1"/>
</dbReference>
<dbReference type="RefSeq" id="YP_097383.1">
    <property type="nucleotide sequence ID" value="NC_006347.1"/>
</dbReference>
<dbReference type="SMR" id="Q650H5"/>
<dbReference type="STRING" id="295405.BF0100"/>
<dbReference type="KEGG" id="bfr:BF0100"/>
<dbReference type="PATRIC" id="fig|295405.11.peg.138"/>
<dbReference type="HOGENOM" id="CLU_007831_2_2_10"/>
<dbReference type="OrthoDB" id="9815560at2"/>
<dbReference type="Proteomes" id="UP000002197">
    <property type="component" value="Chromosome"/>
</dbReference>
<dbReference type="GO" id="GO:0005829">
    <property type="term" value="C:cytosol"/>
    <property type="evidence" value="ECO:0007669"/>
    <property type="project" value="TreeGrafter"/>
</dbReference>
<dbReference type="GO" id="GO:0050660">
    <property type="term" value="F:flavin adenine dinucleotide binding"/>
    <property type="evidence" value="ECO:0007669"/>
    <property type="project" value="UniProtKB-UniRule"/>
</dbReference>
<dbReference type="GO" id="GO:0030488">
    <property type="term" value="P:tRNA methylation"/>
    <property type="evidence" value="ECO:0007669"/>
    <property type="project" value="TreeGrafter"/>
</dbReference>
<dbReference type="GO" id="GO:0002098">
    <property type="term" value="P:tRNA wobble uridine modification"/>
    <property type="evidence" value="ECO:0007669"/>
    <property type="project" value="InterPro"/>
</dbReference>
<dbReference type="FunFam" id="1.10.10.1800:FF:000003">
    <property type="entry name" value="tRNA uridine 5-carboxymethylaminomethyl modification enzyme MnmG"/>
    <property type="match status" value="1"/>
</dbReference>
<dbReference type="FunFam" id="1.10.150.570:FF:000001">
    <property type="entry name" value="tRNA uridine 5-carboxymethylaminomethyl modification enzyme MnmG"/>
    <property type="match status" value="1"/>
</dbReference>
<dbReference type="FunFam" id="3.50.50.60:FF:000002">
    <property type="entry name" value="tRNA uridine 5-carboxymethylaminomethyl modification enzyme MnmG"/>
    <property type="match status" value="1"/>
</dbReference>
<dbReference type="FunFam" id="3.50.50.60:FF:000010">
    <property type="entry name" value="tRNA uridine 5-carboxymethylaminomethyl modification enzyme MnmG"/>
    <property type="match status" value="1"/>
</dbReference>
<dbReference type="Gene3D" id="3.50.50.60">
    <property type="entry name" value="FAD/NAD(P)-binding domain"/>
    <property type="match status" value="2"/>
</dbReference>
<dbReference type="Gene3D" id="1.10.150.570">
    <property type="entry name" value="GidA associated domain, C-terminal subdomain"/>
    <property type="match status" value="1"/>
</dbReference>
<dbReference type="Gene3D" id="1.10.10.1800">
    <property type="entry name" value="tRNA uridine 5-carboxymethylaminomethyl modification enzyme MnmG/GidA"/>
    <property type="match status" value="1"/>
</dbReference>
<dbReference type="HAMAP" id="MF_00129">
    <property type="entry name" value="MnmG_GidA"/>
    <property type="match status" value="1"/>
</dbReference>
<dbReference type="InterPro" id="IPR036188">
    <property type="entry name" value="FAD/NAD-bd_sf"/>
</dbReference>
<dbReference type="InterPro" id="IPR049312">
    <property type="entry name" value="GIDA_C_N"/>
</dbReference>
<dbReference type="InterPro" id="IPR004416">
    <property type="entry name" value="MnmG"/>
</dbReference>
<dbReference type="InterPro" id="IPR002218">
    <property type="entry name" value="MnmG-rel"/>
</dbReference>
<dbReference type="InterPro" id="IPR020595">
    <property type="entry name" value="MnmG-rel_CS"/>
</dbReference>
<dbReference type="InterPro" id="IPR026904">
    <property type="entry name" value="MnmG_C"/>
</dbReference>
<dbReference type="InterPro" id="IPR047001">
    <property type="entry name" value="MnmG_C_subdom"/>
</dbReference>
<dbReference type="InterPro" id="IPR044920">
    <property type="entry name" value="MnmG_C_subdom_sf"/>
</dbReference>
<dbReference type="InterPro" id="IPR040131">
    <property type="entry name" value="MnmG_N"/>
</dbReference>
<dbReference type="NCBIfam" id="TIGR00136">
    <property type="entry name" value="mnmG_gidA"/>
    <property type="match status" value="1"/>
</dbReference>
<dbReference type="PANTHER" id="PTHR11806">
    <property type="entry name" value="GLUCOSE INHIBITED DIVISION PROTEIN A"/>
    <property type="match status" value="1"/>
</dbReference>
<dbReference type="PANTHER" id="PTHR11806:SF0">
    <property type="entry name" value="PROTEIN MTO1 HOMOLOG, MITOCHONDRIAL"/>
    <property type="match status" value="1"/>
</dbReference>
<dbReference type="Pfam" id="PF01134">
    <property type="entry name" value="GIDA"/>
    <property type="match status" value="1"/>
</dbReference>
<dbReference type="Pfam" id="PF21680">
    <property type="entry name" value="GIDA_C_1st"/>
    <property type="match status" value="1"/>
</dbReference>
<dbReference type="Pfam" id="PF13932">
    <property type="entry name" value="SAM_GIDA_C"/>
    <property type="match status" value="1"/>
</dbReference>
<dbReference type="SMART" id="SM01228">
    <property type="entry name" value="GIDA_assoc_3"/>
    <property type="match status" value="1"/>
</dbReference>
<dbReference type="SUPFAM" id="SSF51905">
    <property type="entry name" value="FAD/NAD(P)-binding domain"/>
    <property type="match status" value="1"/>
</dbReference>
<dbReference type="PROSITE" id="PS01280">
    <property type="entry name" value="GIDA_1"/>
    <property type="match status" value="1"/>
</dbReference>
<dbReference type="PROSITE" id="PS01281">
    <property type="entry name" value="GIDA_2"/>
    <property type="match status" value="1"/>
</dbReference>
<feature type="chain" id="PRO_0000117056" description="tRNA uridine 5-carboxymethylaminomethyl modification enzyme MnmG">
    <location>
        <begin position="1"/>
        <end position="625"/>
    </location>
</feature>
<feature type="binding site" evidence="1">
    <location>
        <begin position="11"/>
        <end position="16"/>
    </location>
    <ligand>
        <name>FAD</name>
        <dbReference type="ChEBI" id="CHEBI:57692"/>
    </ligand>
</feature>
<feature type="binding site" evidence="1">
    <location>
        <position position="123"/>
    </location>
    <ligand>
        <name>FAD</name>
        <dbReference type="ChEBI" id="CHEBI:57692"/>
    </ligand>
</feature>
<feature type="binding site" evidence="1">
    <location>
        <position position="178"/>
    </location>
    <ligand>
        <name>FAD</name>
        <dbReference type="ChEBI" id="CHEBI:57692"/>
    </ligand>
</feature>
<feature type="binding site" evidence="1">
    <location>
        <begin position="271"/>
        <end position="285"/>
    </location>
    <ligand>
        <name>NAD(+)</name>
        <dbReference type="ChEBI" id="CHEBI:57540"/>
    </ligand>
</feature>
<feature type="binding site" evidence="1">
    <location>
        <position position="368"/>
    </location>
    <ligand>
        <name>FAD</name>
        <dbReference type="ChEBI" id="CHEBI:57692"/>
    </ligand>
</feature>
<accession>Q650H5</accession>
<gene>
    <name evidence="1" type="primary">mnmG</name>
    <name evidence="1" type="synonym">gidA</name>
    <name type="ordered locus">BF0100</name>
</gene>
<evidence type="ECO:0000255" key="1">
    <source>
        <dbReference type="HAMAP-Rule" id="MF_00129"/>
    </source>
</evidence>
<sequence length="625" mass="70191">MDFKYDVIVIGAGHAGCEAAAAAANLGSKTCLITMDMNKVAQMSCNPAVGGIAKGQIVREIDALGGYMGLVTDQTAIQFRILNRSKGPAMWSPRAQCDRNKFIWAWREILENIPNLHIWQDTVKEIIVENGEVVGLKTFWDVTFHARCIVLTAGTFLNGLMHVGKTQLPGGRMAEPASYKLTESIAKHGIEYGRMKTGTPVRIDGRSVHYELMDTQDGECDFHKFSFMNTSVRHLKQLQCWTCFTNEEAHNVLRNGLADSPLFNGQIQSIGPRYCPSIETKIVTFPDKEQHQLFLEPEGETTQELYLNGFSSSLPMEIQIEALKKIPAFKDLVIYRPGYAIEYDYFDPTQLKHTLESKKIKNLFFAGQVNGTTGYEEAGGQGIIAGINAHINCHGGEPFTLARDEAYIGVLIDDLVTKGVDEPYRMFTSRAEYRILLRMDDADMRLTERAYKLGLVKEDRYALLKSKREAVENIVNFTRNYSIKAALINDALENLGTTPLRQGCKLIDLINRPQITIENISEYVPAFKRELDKITDERKEEILEAAEILIKYEGYIGRERIIADKLARLESIKIKGKFDYDSLQSLSTEARQKLKKIDPETIAQASRIPGVSPSDINVLLVLSGR</sequence>
<protein>
    <recommendedName>
        <fullName evidence="1">tRNA uridine 5-carboxymethylaminomethyl modification enzyme MnmG</fullName>
    </recommendedName>
    <alternativeName>
        <fullName evidence="1">Glucose-inhibited division protein A</fullName>
    </alternativeName>
</protein>
<reference key="1">
    <citation type="journal article" date="2004" name="Proc. Natl. Acad. Sci. U.S.A.">
        <title>Genomic analysis of Bacteroides fragilis reveals extensive DNA inversions regulating cell surface adaptation.</title>
        <authorList>
            <person name="Kuwahara T."/>
            <person name="Yamashita A."/>
            <person name="Hirakawa H."/>
            <person name="Nakayama H."/>
            <person name="Toh H."/>
            <person name="Okada N."/>
            <person name="Kuhara S."/>
            <person name="Hattori M."/>
            <person name="Hayashi T."/>
            <person name="Ohnishi Y."/>
        </authorList>
    </citation>
    <scope>NUCLEOTIDE SEQUENCE [LARGE SCALE GENOMIC DNA]</scope>
    <source>
        <strain>YCH46</strain>
    </source>
</reference>